<name>NUOG_ECOLI</name>
<keyword id="KW-0001">2Fe-2S</keyword>
<keyword id="KW-0002">3D-structure</keyword>
<keyword id="KW-0004">4Fe-4S</keyword>
<keyword id="KW-0997">Cell inner membrane</keyword>
<keyword id="KW-1003">Cell membrane</keyword>
<keyword id="KW-0963">Cytoplasm</keyword>
<keyword id="KW-0903">Direct protein sequencing</keyword>
<keyword id="KW-0408">Iron</keyword>
<keyword id="KW-0411">Iron-sulfur</keyword>
<keyword id="KW-0472">Membrane</keyword>
<keyword id="KW-0479">Metal-binding</keyword>
<keyword id="KW-0520">NAD</keyword>
<keyword id="KW-0874">Quinone</keyword>
<keyword id="KW-1185">Reference proteome</keyword>
<keyword id="KW-1278">Translocase</keyword>
<keyword id="KW-0830">Ubiquinone</keyword>
<accession>P33602</accession>
<accession>P76489</accession>
<accession>P78184</accession>
<accession>P78185</accession>
<evidence type="ECO:0000250" key="1"/>
<evidence type="ECO:0000255" key="2">
    <source>
        <dbReference type="PROSITE-ProRule" id="PRU00465"/>
    </source>
</evidence>
<evidence type="ECO:0000255" key="3">
    <source>
        <dbReference type="PROSITE-ProRule" id="PRU01004"/>
    </source>
</evidence>
<evidence type="ECO:0000255" key="4">
    <source>
        <dbReference type="PROSITE-ProRule" id="PRU01184"/>
    </source>
</evidence>
<evidence type="ECO:0000269" key="5">
    <source>
    </source>
</evidence>
<evidence type="ECO:0000269" key="6">
    <source>
    </source>
</evidence>
<evidence type="ECO:0000305" key="7"/>
<evidence type="ECO:0007829" key="8">
    <source>
        <dbReference type="PDB" id="7AWT"/>
    </source>
</evidence>
<evidence type="ECO:0007829" key="9">
    <source>
        <dbReference type="PDB" id="7NZ1"/>
    </source>
</evidence>
<evidence type="ECO:0007829" key="10">
    <source>
        <dbReference type="PDB" id="7P61"/>
    </source>
</evidence>
<evidence type="ECO:0007829" key="11">
    <source>
        <dbReference type="PDB" id="7P63"/>
    </source>
</evidence>
<evidence type="ECO:0007829" key="12">
    <source>
        <dbReference type="PDB" id="7Z7V"/>
    </source>
</evidence>
<organism>
    <name type="scientific">Escherichia coli (strain K12)</name>
    <dbReference type="NCBI Taxonomy" id="83333"/>
    <lineage>
        <taxon>Bacteria</taxon>
        <taxon>Pseudomonadati</taxon>
        <taxon>Pseudomonadota</taxon>
        <taxon>Gammaproteobacteria</taxon>
        <taxon>Enterobacterales</taxon>
        <taxon>Enterobacteriaceae</taxon>
        <taxon>Escherichia</taxon>
    </lineage>
</organism>
<gene>
    <name type="primary">nuoG</name>
    <name type="ordered locus">b2283</name>
    <name type="ordered locus">JW2278</name>
</gene>
<feature type="initiator methionine" description="Removed" evidence="6">
    <location>
        <position position="1"/>
    </location>
</feature>
<feature type="chain" id="PRO_0000118546" description="NADH-quinone oxidoreductase subunit G">
    <location>
        <begin position="2"/>
        <end position="908"/>
    </location>
</feature>
<feature type="domain" description="2Fe-2S ferredoxin-type" evidence="2">
    <location>
        <begin position="2"/>
        <end position="83"/>
    </location>
</feature>
<feature type="domain" description="4Fe-4S His(Cys)3-ligated-type" evidence="4">
    <location>
        <begin position="83"/>
        <end position="122"/>
    </location>
</feature>
<feature type="domain" description="4Fe-4S Mo/W bis-MGD-type" evidence="3">
    <location>
        <begin position="221"/>
        <end position="277"/>
    </location>
</feature>
<feature type="binding site" evidence="1">
    <location>
        <position position="34"/>
    </location>
    <ligand>
        <name>[2Fe-2S] cluster</name>
        <dbReference type="ChEBI" id="CHEBI:190135"/>
    </ligand>
</feature>
<feature type="binding site" evidence="1">
    <location>
        <position position="45"/>
    </location>
    <ligand>
        <name>[2Fe-2S] cluster</name>
        <dbReference type="ChEBI" id="CHEBI:190135"/>
    </ligand>
</feature>
<feature type="binding site" evidence="1">
    <location>
        <position position="48"/>
    </location>
    <ligand>
        <name>[2Fe-2S] cluster</name>
        <dbReference type="ChEBI" id="CHEBI:190135"/>
    </ligand>
</feature>
<feature type="binding site" evidence="1">
    <location>
        <position position="67"/>
    </location>
    <ligand>
        <name>[2Fe-2S] cluster</name>
        <dbReference type="ChEBI" id="CHEBI:190135"/>
    </ligand>
</feature>
<feature type="binding site" evidence="4">
    <location>
        <position position="99"/>
    </location>
    <ligand>
        <name>[4Fe-4S] cluster</name>
        <dbReference type="ChEBI" id="CHEBI:49883"/>
        <label>1</label>
    </ligand>
</feature>
<feature type="binding site" evidence="4">
    <location>
        <position position="103"/>
    </location>
    <ligand>
        <name>[4Fe-4S] cluster</name>
        <dbReference type="ChEBI" id="CHEBI:49883"/>
        <label>1</label>
    </ligand>
</feature>
<feature type="binding site" evidence="4">
    <location>
        <position position="106"/>
    </location>
    <ligand>
        <name>[4Fe-4S] cluster</name>
        <dbReference type="ChEBI" id="CHEBI:49883"/>
        <label>1</label>
    </ligand>
</feature>
<feature type="binding site" evidence="4">
    <location>
        <position position="112"/>
    </location>
    <ligand>
        <name>[4Fe-4S] cluster</name>
        <dbReference type="ChEBI" id="CHEBI:49883"/>
        <label>1</label>
    </ligand>
</feature>
<feature type="binding site" evidence="1">
    <location>
        <position position="151"/>
    </location>
    <ligand>
        <name>[4Fe-4S] cluster</name>
        <dbReference type="ChEBI" id="CHEBI:49883"/>
        <label>2</label>
    </ligand>
</feature>
<feature type="binding site" evidence="1">
    <location>
        <position position="154"/>
    </location>
    <ligand>
        <name>[4Fe-4S] cluster</name>
        <dbReference type="ChEBI" id="CHEBI:49883"/>
        <label>2</label>
    </ligand>
</feature>
<feature type="binding site" evidence="1">
    <location>
        <position position="157"/>
    </location>
    <ligand>
        <name>[4Fe-4S] cluster</name>
        <dbReference type="ChEBI" id="CHEBI:49883"/>
        <label>2</label>
    </ligand>
</feature>
<feature type="binding site" evidence="1">
    <location>
        <position position="201"/>
    </location>
    <ligand>
        <name>[4Fe-4S] cluster</name>
        <dbReference type="ChEBI" id="CHEBI:49883"/>
        <label>2</label>
    </ligand>
</feature>
<feature type="binding site" evidence="1">
    <location>
        <position position="228"/>
    </location>
    <ligand>
        <name>[4Fe-4S] cluster</name>
        <dbReference type="ChEBI" id="CHEBI:49883"/>
        <label>3</label>
    </ligand>
</feature>
<feature type="binding site" evidence="1">
    <location>
        <position position="231"/>
    </location>
    <ligand>
        <name>[4Fe-4S] cluster</name>
        <dbReference type="ChEBI" id="CHEBI:49883"/>
        <label>3</label>
    </ligand>
</feature>
<feature type="binding site" evidence="1">
    <location>
        <position position="235"/>
    </location>
    <ligand>
        <name>[4Fe-4S] cluster</name>
        <dbReference type="ChEBI" id="CHEBI:49883"/>
        <label>3</label>
    </ligand>
</feature>
<feature type="binding site" evidence="1">
    <location>
        <position position="263"/>
    </location>
    <ligand>
        <name>[4Fe-4S] cluster</name>
        <dbReference type="ChEBI" id="CHEBI:49883"/>
        <label>3</label>
    </ligand>
</feature>
<feature type="sequence conflict" description="In Ref. 1; CAA48366." evidence="7" ref="1">
    <original>T</original>
    <variation>Q</variation>
    <location>
        <position position="188"/>
    </location>
</feature>
<feature type="sequence conflict" description="In Ref. 1; CAA48366." evidence="7" ref="1">
    <original>T</original>
    <variation>K</variation>
    <location>
        <position position="210"/>
    </location>
</feature>
<feature type="sequence conflict" description="In Ref. 1; CAA48366." evidence="7" ref="1">
    <location>
        <position position="390"/>
    </location>
</feature>
<feature type="sequence conflict" description="In Ref. 1; CAA48366." evidence="7" ref="1">
    <original>S</original>
    <variation>T</variation>
    <location>
        <position position="648"/>
    </location>
</feature>
<feature type="strand" evidence="9">
    <location>
        <begin position="2"/>
        <end position="6"/>
    </location>
</feature>
<feature type="strand" evidence="9">
    <location>
        <begin position="9"/>
        <end position="13"/>
    </location>
</feature>
<feature type="strand" evidence="10">
    <location>
        <begin position="15"/>
        <end position="18"/>
    </location>
</feature>
<feature type="helix" evidence="9">
    <location>
        <begin position="19"/>
        <end position="25"/>
    </location>
</feature>
<feature type="turn" evidence="9">
    <location>
        <begin position="37"/>
        <end position="39"/>
    </location>
</feature>
<feature type="strand" evidence="9">
    <location>
        <begin position="48"/>
        <end position="57"/>
    </location>
</feature>
<feature type="strand" evidence="9">
    <location>
        <begin position="62"/>
        <end position="65"/>
    </location>
</feature>
<feature type="strand" evidence="9">
    <location>
        <begin position="68"/>
        <end position="70"/>
    </location>
</feature>
<feature type="strand" evidence="9">
    <location>
        <begin position="76"/>
        <end position="80"/>
    </location>
</feature>
<feature type="helix" evidence="9">
    <location>
        <begin position="82"/>
        <end position="95"/>
    </location>
</feature>
<feature type="turn" evidence="10">
    <location>
        <begin position="96"/>
        <end position="98"/>
    </location>
</feature>
<feature type="helix" evidence="9">
    <location>
        <begin position="103"/>
        <end position="105"/>
    </location>
</feature>
<feature type="turn" evidence="9">
    <location>
        <begin position="107"/>
        <end position="110"/>
    </location>
</feature>
<feature type="helix" evidence="9">
    <location>
        <begin position="113"/>
        <end position="121"/>
    </location>
</feature>
<feature type="strand" evidence="9">
    <location>
        <begin position="142"/>
        <end position="146"/>
    </location>
</feature>
<feature type="helix" evidence="9">
    <location>
        <begin position="148"/>
        <end position="150"/>
    </location>
</feature>
<feature type="helix" evidence="9">
    <location>
        <begin position="156"/>
        <end position="161"/>
    </location>
</feature>
<feature type="turn" evidence="9">
    <location>
        <begin position="162"/>
        <end position="164"/>
    </location>
</feature>
<feature type="strand" evidence="9">
    <location>
        <begin position="171"/>
        <end position="174"/>
    </location>
</feature>
<feature type="helix" evidence="9">
    <location>
        <begin position="176"/>
        <end position="178"/>
    </location>
</feature>
<feature type="strand" evidence="9">
    <location>
        <begin position="180"/>
        <end position="182"/>
    </location>
</feature>
<feature type="strand" evidence="9">
    <location>
        <begin position="184"/>
        <end position="187"/>
    </location>
</feature>
<feature type="helix" evidence="9">
    <location>
        <begin position="194"/>
        <end position="196"/>
    </location>
</feature>
<feature type="helix" evidence="9">
    <location>
        <begin position="197"/>
        <end position="200"/>
    </location>
</feature>
<feature type="strand" evidence="9">
    <location>
        <begin position="201"/>
        <end position="208"/>
    </location>
</feature>
<feature type="helix" evidence="9">
    <location>
        <begin position="209"/>
        <end position="213"/>
    </location>
</feature>
<feature type="helix" evidence="9">
    <location>
        <begin position="218"/>
        <end position="220"/>
    </location>
</feature>
<feature type="strand" evidence="9">
    <location>
        <begin position="230"/>
        <end position="233"/>
    </location>
</feature>
<feature type="strand" evidence="9">
    <location>
        <begin position="236"/>
        <end position="242"/>
    </location>
</feature>
<feature type="strand" evidence="9">
    <location>
        <begin position="245"/>
        <end position="251"/>
    </location>
</feature>
<feature type="turn" evidence="9">
    <location>
        <begin position="255"/>
        <end position="260"/>
    </location>
</feature>
<feature type="helix" evidence="9">
    <location>
        <begin position="264"/>
        <end position="268"/>
    </location>
</feature>
<feature type="helix" evidence="9">
    <location>
        <begin position="271"/>
        <end position="274"/>
    </location>
</feature>
<feature type="strand" evidence="9">
    <location>
        <begin position="283"/>
        <end position="286"/>
    </location>
</feature>
<feature type="strand" evidence="9">
    <location>
        <begin position="289"/>
        <end position="292"/>
    </location>
</feature>
<feature type="helix" evidence="9">
    <location>
        <begin position="295"/>
        <end position="308"/>
    </location>
</feature>
<feature type="strand" evidence="9">
    <location>
        <begin position="312"/>
        <end position="315"/>
    </location>
</feature>
<feature type="strand" evidence="12">
    <location>
        <begin position="318"/>
        <end position="320"/>
    </location>
</feature>
<feature type="helix" evidence="9">
    <location>
        <begin position="322"/>
        <end position="332"/>
    </location>
</feature>
<feature type="strand" evidence="9">
    <location>
        <begin position="336"/>
        <end position="338"/>
    </location>
</feature>
<feature type="helix" evidence="9">
    <location>
        <begin position="343"/>
        <end position="358"/>
    </location>
</feature>
<feature type="strand" evidence="12">
    <location>
        <begin position="359"/>
        <end position="362"/>
    </location>
</feature>
<feature type="helix" evidence="9">
    <location>
        <begin position="368"/>
        <end position="371"/>
    </location>
</feature>
<feature type="strand" evidence="9">
    <location>
        <begin position="373"/>
        <end position="379"/>
    </location>
</feature>
<feature type="turn" evidence="9">
    <location>
        <begin position="382"/>
        <end position="384"/>
    </location>
</feature>
<feature type="helix" evidence="9">
    <location>
        <begin position="387"/>
        <end position="397"/>
    </location>
</feature>
<feature type="helix" evidence="9">
    <location>
        <begin position="399"/>
        <end position="407"/>
    </location>
</feature>
<feature type="helix" evidence="9">
    <location>
        <begin position="415"/>
        <end position="422"/>
    </location>
</feature>
<feature type="strand" evidence="9">
    <location>
        <begin position="429"/>
        <end position="435"/>
    </location>
</feature>
<feature type="turn" evidence="9">
    <location>
        <begin position="438"/>
        <end position="442"/>
    </location>
</feature>
<feature type="strand" evidence="9">
    <location>
        <begin position="444"/>
        <end position="448"/>
    </location>
</feature>
<feature type="helix" evidence="9">
    <location>
        <begin position="451"/>
        <end position="465"/>
    </location>
</feature>
<feature type="strand" evidence="8">
    <location>
        <begin position="467"/>
        <end position="469"/>
    </location>
</feature>
<feature type="helix" evidence="9">
    <location>
        <begin position="477"/>
        <end position="491"/>
    </location>
</feature>
<feature type="strand" evidence="9">
    <location>
        <begin position="494"/>
        <end position="501"/>
    </location>
</feature>
<feature type="helix" evidence="9">
    <location>
        <begin position="502"/>
        <end position="504"/>
    </location>
</feature>
<feature type="helix" evidence="9">
    <location>
        <begin position="507"/>
        <end position="522"/>
    </location>
</feature>
<feature type="strand" evidence="9">
    <location>
        <begin position="528"/>
        <end position="532"/>
    </location>
</feature>
<feature type="helix" evidence="9">
    <location>
        <begin position="538"/>
        <end position="544"/>
    </location>
</feature>
<feature type="helix" evidence="9">
    <location>
        <begin position="549"/>
        <end position="557"/>
    </location>
</feature>
<feature type="turn" evidence="8">
    <location>
        <begin position="558"/>
        <end position="560"/>
    </location>
</feature>
<feature type="strand" evidence="9">
    <location>
        <begin position="563"/>
        <end position="568"/>
    </location>
</feature>
<feature type="turn" evidence="9">
    <location>
        <begin position="571"/>
        <end position="574"/>
    </location>
</feature>
<feature type="helix" evidence="9">
    <location>
        <begin position="577"/>
        <end position="583"/>
    </location>
</feature>
<feature type="strand" evidence="9">
    <location>
        <begin position="588"/>
        <end position="596"/>
    </location>
</feature>
<feature type="helix" evidence="9">
    <location>
        <begin position="599"/>
        <end position="601"/>
    </location>
</feature>
<feature type="strand" evidence="9">
    <location>
        <begin position="605"/>
        <end position="610"/>
    </location>
</feature>
<feature type="helix" evidence="9">
    <location>
        <begin position="613"/>
        <end position="615"/>
    </location>
</feature>
<feature type="strand" evidence="9">
    <location>
        <begin position="618"/>
        <end position="621"/>
    </location>
</feature>
<feature type="strand" evidence="10">
    <location>
        <begin position="623"/>
        <end position="625"/>
    </location>
</feature>
<feature type="strand" evidence="9">
    <location>
        <begin position="626"/>
        <end position="630"/>
    </location>
</feature>
<feature type="turn" evidence="9">
    <location>
        <begin position="636"/>
        <end position="639"/>
    </location>
</feature>
<feature type="helix" evidence="9">
    <location>
        <begin position="648"/>
        <end position="661"/>
    </location>
</feature>
<feature type="helix" evidence="9">
    <location>
        <begin position="669"/>
        <end position="679"/>
    </location>
</feature>
<feature type="helix" evidence="9">
    <location>
        <begin position="681"/>
        <end position="688"/>
    </location>
</feature>
<feature type="strand" evidence="9">
    <location>
        <begin position="702"/>
        <end position="705"/>
    </location>
</feature>
<feature type="turn" evidence="9">
    <location>
        <begin position="712"/>
        <end position="719"/>
    </location>
</feature>
<feature type="strand" evidence="9">
    <location>
        <begin position="730"/>
        <end position="741"/>
    </location>
</feature>
<feature type="helix" evidence="9">
    <location>
        <begin position="762"/>
        <end position="768"/>
    </location>
</feature>
<feature type="strand" evidence="9">
    <location>
        <begin position="769"/>
        <end position="771"/>
    </location>
</feature>
<feature type="strand" evidence="11">
    <location>
        <begin position="774"/>
        <end position="776"/>
    </location>
</feature>
<feature type="strand" evidence="9">
    <location>
        <begin position="783"/>
        <end position="785"/>
    </location>
</feature>
<feature type="strand" evidence="9">
    <location>
        <begin position="810"/>
        <end position="815"/>
    </location>
</feature>
<feature type="turn" evidence="9">
    <location>
        <begin position="818"/>
        <end position="820"/>
    </location>
</feature>
<feature type="helix" evidence="9">
    <location>
        <begin position="825"/>
        <end position="827"/>
    </location>
</feature>
<feature type="helix" evidence="9">
    <location>
        <begin position="831"/>
        <end position="834"/>
    </location>
</feature>
<feature type="strand" evidence="9">
    <location>
        <begin position="840"/>
        <end position="842"/>
    </location>
</feature>
<feature type="helix" evidence="9">
    <location>
        <begin position="844"/>
        <end position="850"/>
    </location>
</feature>
<feature type="strand" evidence="9">
    <location>
        <begin position="857"/>
        <end position="862"/>
    </location>
</feature>
<feature type="strand" evidence="9">
    <location>
        <begin position="865"/>
        <end position="873"/>
    </location>
</feature>
<feature type="strand" evidence="9">
    <location>
        <begin position="875"/>
        <end position="877"/>
    </location>
</feature>
<feature type="strand" evidence="9">
    <location>
        <begin position="881"/>
        <end position="885"/>
    </location>
</feature>
<feature type="strand" evidence="9">
    <location>
        <begin position="888"/>
        <end position="890"/>
    </location>
</feature>
<feature type="helix" evidence="9">
    <location>
        <begin position="893"/>
        <end position="895"/>
    </location>
</feature>
<feature type="strand" evidence="9">
    <location>
        <begin position="903"/>
        <end position="905"/>
    </location>
</feature>
<dbReference type="EC" id="7.1.1.-"/>
<dbReference type="EMBL" id="X68301">
    <property type="protein sequence ID" value="CAA48366.1"/>
    <property type="status" value="ALT_FRAME"/>
    <property type="molecule type" value="Genomic_DNA"/>
</dbReference>
<dbReference type="EMBL" id="U00096">
    <property type="protein sequence ID" value="AAC75343.2"/>
    <property type="molecule type" value="Genomic_DNA"/>
</dbReference>
<dbReference type="EMBL" id="AP009048">
    <property type="protein sequence ID" value="BAA16111.2"/>
    <property type="status" value="ALT_INIT"/>
    <property type="molecule type" value="Genomic_DNA"/>
</dbReference>
<dbReference type="EMBL" id="L25055">
    <property type="protein sequence ID" value="AAA03538.1"/>
    <property type="molecule type" value="Unassigned_DNA"/>
</dbReference>
<dbReference type="PIR" id="A65000">
    <property type="entry name" value="A65000"/>
</dbReference>
<dbReference type="RefSeq" id="NP_416786.4">
    <property type="nucleotide sequence ID" value="NC_000913.3"/>
</dbReference>
<dbReference type="RefSeq" id="WP_000190939.1">
    <property type="nucleotide sequence ID" value="NZ_LN832404.1"/>
</dbReference>
<dbReference type="PDB" id="7AWT">
    <property type="method" value="EM"/>
    <property type="resolution" value="2.73 A"/>
    <property type="chains" value="G=1-908"/>
</dbReference>
<dbReference type="PDB" id="7NYR">
    <property type="method" value="EM"/>
    <property type="resolution" value="3.30 A"/>
    <property type="chains" value="G=1-908"/>
</dbReference>
<dbReference type="PDB" id="7NYU">
    <property type="method" value="EM"/>
    <property type="resolution" value="3.80 A"/>
    <property type="chains" value="G=1-908"/>
</dbReference>
<dbReference type="PDB" id="7NYV">
    <property type="method" value="EM"/>
    <property type="resolution" value="3.70 A"/>
    <property type="chains" value="G=1-908"/>
</dbReference>
<dbReference type="PDB" id="7NZ1">
    <property type="method" value="EM"/>
    <property type="resolution" value="2.10 A"/>
    <property type="chains" value="G=1-908"/>
</dbReference>
<dbReference type="PDB" id="7P61">
    <property type="method" value="EM"/>
    <property type="resolution" value="3.20 A"/>
    <property type="chains" value="G=2-906"/>
</dbReference>
<dbReference type="PDB" id="7P62">
    <property type="method" value="EM"/>
    <property type="resolution" value="3.60 A"/>
    <property type="chains" value="G=2-906"/>
</dbReference>
<dbReference type="PDB" id="7P63">
    <property type="method" value="EM"/>
    <property type="resolution" value="3.40 A"/>
    <property type="chains" value="G=1-908"/>
</dbReference>
<dbReference type="PDB" id="7P64">
    <property type="method" value="EM"/>
    <property type="resolution" value="2.50 A"/>
    <property type="chains" value="G=2-906"/>
</dbReference>
<dbReference type="PDB" id="7P69">
    <property type="method" value="EM"/>
    <property type="resolution" value="3.00 A"/>
    <property type="chains" value="G=2-906"/>
</dbReference>
<dbReference type="PDB" id="7P7C">
    <property type="method" value="EM"/>
    <property type="resolution" value="2.40 A"/>
    <property type="chains" value="G=2-906"/>
</dbReference>
<dbReference type="PDB" id="7P7E">
    <property type="method" value="EM"/>
    <property type="resolution" value="2.70 A"/>
    <property type="chains" value="G=2-906"/>
</dbReference>
<dbReference type="PDB" id="7P7J">
    <property type="method" value="EM"/>
    <property type="resolution" value="2.70 A"/>
    <property type="chains" value="G=2-906"/>
</dbReference>
<dbReference type="PDB" id="7P7K">
    <property type="method" value="EM"/>
    <property type="resolution" value="3.10 A"/>
    <property type="chains" value="G=2-906"/>
</dbReference>
<dbReference type="PDB" id="7P7L">
    <property type="method" value="EM"/>
    <property type="resolution" value="3.00 A"/>
    <property type="chains" value="G=2-906"/>
</dbReference>
<dbReference type="PDB" id="7P7M">
    <property type="method" value="EM"/>
    <property type="resolution" value="3.20 A"/>
    <property type="chains" value="G=2-906"/>
</dbReference>
<dbReference type="PDB" id="7Z7R">
    <property type="method" value="EM"/>
    <property type="resolution" value="3.36 A"/>
    <property type="chains" value="G=1-908"/>
</dbReference>
<dbReference type="PDB" id="7Z7S">
    <property type="method" value="EM"/>
    <property type="resolution" value="2.40 A"/>
    <property type="chains" value="G=1-908"/>
</dbReference>
<dbReference type="PDB" id="7Z7T">
    <property type="method" value="EM"/>
    <property type="resolution" value="3.10 A"/>
    <property type="chains" value="G=1-908"/>
</dbReference>
<dbReference type="PDB" id="7Z7V">
    <property type="method" value="EM"/>
    <property type="resolution" value="2.29 A"/>
    <property type="chains" value="G=1-908"/>
</dbReference>
<dbReference type="PDB" id="7Z80">
    <property type="method" value="EM"/>
    <property type="resolution" value="2.93 A"/>
    <property type="chains" value="G=1-908"/>
</dbReference>
<dbReference type="PDB" id="7Z83">
    <property type="method" value="EM"/>
    <property type="resolution" value="2.88 A"/>
    <property type="chains" value="G=1-908"/>
</dbReference>
<dbReference type="PDB" id="7Z84">
    <property type="method" value="EM"/>
    <property type="resolution" value="2.87 A"/>
    <property type="chains" value="G=1-908"/>
</dbReference>
<dbReference type="PDB" id="7ZC5">
    <property type="method" value="EM"/>
    <property type="resolution" value="3.00 A"/>
    <property type="chains" value="G=1-908"/>
</dbReference>
<dbReference type="PDB" id="7ZCI">
    <property type="method" value="EM"/>
    <property type="resolution" value="2.69 A"/>
    <property type="chains" value="G=1-908"/>
</dbReference>
<dbReference type="PDBsum" id="7AWT"/>
<dbReference type="PDBsum" id="7NYR"/>
<dbReference type="PDBsum" id="7NYU"/>
<dbReference type="PDBsum" id="7NYV"/>
<dbReference type="PDBsum" id="7NZ1"/>
<dbReference type="PDBsum" id="7P61"/>
<dbReference type="PDBsum" id="7P62"/>
<dbReference type="PDBsum" id="7P63"/>
<dbReference type="PDBsum" id="7P64"/>
<dbReference type="PDBsum" id="7P69"/>
<dbReference type="PDBsum" id="7P7C"/>
<dbReference type="PDBsum" id="7P7E"/>
<dbReference type="PDBsum" id="7P7J"/>
<dbReference type="PDBsum" id="7P7K"/>
<dbReference type="PDBsum" id="7P7L"/>
<dbReference type="PDBsum" id="7P7M"/>
<dbReference type="PDBsum" id="7Z7R"/>
<dbReference type="PDBsum" id="7Z7S"/>
<dbReference type="PDBsum" id="7Z7T"/>
<dbReference type="PDBsum" id="7Z7V"/>
<dbReference type="PDBsum" id="7Z80"/>
<dbReference type="PDBsum" id="7Z83"/>
<dbReference type="PDBsum" id="7Z84"/>
<dbReference type="PDBsum" id="7ZC5"/>
<dbReference type="PDBsum" id="7ZCI"/>
<dbReference type="EMDB" id="EMD-12653"/>
<dbReference type="EMDB" id="EMD-12654"/>
<dbReference type="EMDB" id="EMD-12655"/>
<dbReference type="EMDB" id="EMD-12661"/>
<dbReference type="SMR" id="P33602"/>
<dbReference type="BioGRID" id="4260512">
    <property type="interactions" value="77"/>
</dbReference>
<dbReference type="BioGRID" id="851103">
    <property type="interactions" value="6"/>
</dbReference>
<dbReference type="ComplexPortal" id="CPX-243">
    <property type="entry name" value="Respiratory chain complex I"/>
</dbReference>
<dbReference type="DIP" id="DIP-10383N"/>
<dbReference type="FunCoup" id="P33602">
    <property type="interactions" value="622"/>
</dbReference>
<dbReference type="IntAct" id="P33602">
    <property type="interactions" value="32"/>
</dbReference>
<dbReference type="STRING" id="511145.b2283"/>
<dbReference type="TCDB" id="3.D.1.1.1">
    <property type="family name" value="the h+ or na+-translocating nadh dehydrogenase (ndh) family"/>
</dbReference>
<dbReference type="jPOST" id="P33602"/>
<dbReference type="PaxDb" id="511145-b2283"/>
<dbReference type="EnsemblBacteria" id="AAC75343">
    <property type="protein sequence ID" value="AAC75343"/>
    <property type="gene ID" value="b2283"/>
</dbReference>
<dbReference type="GeneID" id="946762"/>
<dbReference type="KEGG" id="ecj:JW2278"/>
<dbReference type="KEGG" id="eco:b2283"/>
<dbReference type="KEGG" id="ecoc:C3026_12740"/>
<dbReference type="PATRIC" id="fig|511145.12.peg.2376"/>
<dbReference type="EchoBASE" id="EB2011"/>
<dbReference type="eggNOG" id="COG1034">
    <property type="taxonomic scope" value="Bacteria"/>
</dbReference>
<dbReference type="HOGENOM" id="CLU_000422_11_4_6"/>
<dbReference type="InParanoid" id="P33602"/>
<dbReference type="OMA" id="GRIVMSC"/>
<dbReference type="OrthoDB" id="9810782at2"/>
<dbReference type="PhylomeDB" id="P33602"/>
<dbReference type="BioCyc" id="EcoCyc:NUOG-MONOMER"/>
<dbReference type="BioCyc" id="MetaCyc:NUOG-MONOMER"/>
<dbReference type="PRO" id="PR:P33602"/>
<dbReference type="Proteomes" id="UP000000625">
    <property type="component" value="Chromosome"/>
</dbReference>
<dbReference type="GO" id="GO:0005737">
    <property type="term" value="C:cytoplasm"/>
    <property type="evidence" value="ECO:0007669"/>
    <property type="project" value="UniProtKB-SubCell"/>
</dbReference>
<dbReference type="GO" id="GO:0016020">
    <property type="term" value="C:membrane"/>
    <property type="evidence" value="ECO:0000314"/>
    <property type="project" value="ComplexPortal"/>
</dbReference>
<dbReference type="GO" id="GO:0030964">
    <property type="term" value="C:NADH dehydrogenase complex"/>
    <property type="evidence" value="ECO:0000314"/>
    <property type="project" value="EcoliWiki"/>
</dbReference>
<dbReference type="GO" id="GO:0005886">
    <property type="term" value="C:plasma membrane"/>
    <property type="evidence" value="ECO:0000314"/>
    <property type="project" value="EcoliWiki"/>
</dbReference>
<dbReference type="GO" id="GO:0045271">
    <property type="term" value="C:respiratory chain complex I"/>
    <property type="evidence" value="ECO:0000314"/>
    <property type="project" value="EcoCyc"/>
</dbReference>
<dbReference type="GO" id="GO:0051537">
    <property type="term" value="F:2 iron, 2 sulfur cluster binding"/>
    <property type="evidence" value="ECO:0000314"/>
    <property type="project" value="EcoCyc"/>
</dbReference>
<dbReference type="GO" id="GO:0051539">
    <property type="term" value="F:4 iron, 4 sulfur cluster binding"/>
    <property type="evidence" value="ECO:0000314"/>
    <property type="project" value="EcoCyc"/>
</dbReference>
<dbReference type="GO" id="GO:0046872">
    <property type="term" value="F:metal ion binding"/>
    <property type="evidence" value="ECO:0007669"/>
    <property type="project" value="UniProtKB-KW"/>
</dbReference>
<dbReference type="GO" id="GO:0043546">
    <property type="term" value="F:molybdopterin cofactor binding"/>
    <property type="evidence" value="ECO:0007669"/>
    <property type="project" value="InterPro"/>
</dbReference>
<dbReference type="GO" id="GO:0008137">
    <property type="term" value="F:NADH dehydrogenase (ubiquinone) activity"/>
    <property type="evidence" value="ECO:0007669"/>
    <property type="project" value="InterPro"/>
</dbReference>
<dbReference type="GO" id="GO:0048038">
    <property type="term" value="F:quinone binding"/>
    <property type="evidence" value="ECO:0007669"/>
    <property type="project" value="UniProtKB-KW"/>
</dbReference>
<dbReference type="GO" id="GO:0009060">
    <property type="term" value="P:aerobic respiration"/>
    <property type="evidence" value="ECO:0000315"/>
    <property type="project" value="EcoCyc"/>
</dbReference>
<dbReference type="GO" id="GO:0042773">
    <property type="term" value="P:ATP synthesis coupled electron transport"/>
    <property type="evidence" value="ECO:0007669"/>
    <property type="project" value="InterPro"/>
</dbReference>
<dbReference type="GO" id="GO:0022904">
    <property type="term" value="P:respiratory electron transport chain"/>
    <property type="evidence" value="ECO:0000314"/>
    <property type="project" value="ComplexPortal"/>
</dbReference>
<dbReference type="CDD" id="cd00207">
    <property type="entry name" value="fer2"/>
    <property type="match status" value="1"/>
</dbReference>
<dbReference type="CDD" id="cd02788">
    <property type="entry name" value="MopB_CT_NDH-1_NuoG2-N7"/>
    <property type="match status" value="1"/>
</dbReference>
<dbReference type="CDD" id="cd02771">
    <property type="entry name" value="MopB_NDH-1_NuoG2-N7"/>
    <property type="match status" value="1"/>
</dbReference>
<dbReference type="FunFam" id="2.20.25.90:FF:000003">
    <property type="entry name" value="NADH-quinone oxidoreductase"/>
    <property type="match status" value="1"/>
</dbReference>
<dbReference type="FunFam" id="2.40.40.20:FF:000014">
    <property type="entry name" value="NADH-quinone oxidoreductase"/>
    <property type="match status" value="1"/>
</dbReference>
<dbReference type="FunFam" id="3.10.20.740:FF:000002">
    <property type="entry name" value="NADH-quinone oxidoreductase"/>
    <property type="match status" value="1"/>
</dbReference>
<dbReference type="FunFam" id="3.30.200.210:FF:000004">
    <property type="entry name" value="NADH-quinone oxidoreductase"/>
    <property type="match status" value="1"/>
</dbReference>
<dbReference type="FunFam" id="3.40.50.740:FF:000006">
    <property type="entry name" value="NADH-quinone oxidoreductase"/>
    <property type="match status" value="1"/>
</dbReference>
<dbReference type="Gene3D" id="2.40.40.20">
    <property type="match status" value="1"/>
</dbReference>
<dbReference type="Gene3D" id="3.10.20.740">
    <property type="match status" value="1"/>
</dbReference>
<dbReference type="Gene3D" id="3.30.200.210">
    <property type="match status" value="1"/>
</dbReference>
<dbReference type="Gene3D" id="3.40.50.740">
    <property type="match status" value="1"/>
</dbReference>
<dbReference type="InterPro" id="IPR036010">
    <property type="entry name" value="2Fe-2S_ferredoxin-like_sf"/>
</dbReference>
<dbReference type="InterPro" id="IPR001041">
    <property type="entry name" value="2Fe-2S_ferredoxin-type"/>
</dbReference>
<dbReference type="InterPro" id="IPR009010">
    <property type="entry name" value="Asp_de-COase-like_dom_sf"/>
</dbReference>
<dbReference type="InterPro" id="IPR006657">
    <property type="entry name" value="MoPterin_dinucl-bd_dom"/>
</dbReference>
<dbReference type="InterPro" id="IPR006656">
    <property type="entry name" value="Mopterin_OxRdtase"/>
</dbReference>
<dbReference type="InterPro" id="IPR006963">
    <property type="entry name" value="Mopterin_OxRdtase_4Fe-4S_dom"/>
</dbReference>
<dbReference type="InterPro" id="IPR000283">
    <property type="entry name" value="NADH_UbQ_OxRdtase_75kDa_su_CS"/>
</dbReference>
<dbReference type="InterPro" id="IPR054351">
    <property type="entry name" value="NADH_UbQ_OxRdtase_ferredoxin"/>
</dbReference>
<dbReference type="InterPro" id="IPR010228">
    <property type="entry name" value="NADH_UbQ_OxRdtase_Gsu"/>
</dbReference>
<dbReference type="InterPro" id="IPR019574">
    <property type="entry name" value="NADH_UbQ_OxRdtase_Gsu_4Fe4S-bd"/>
</dbReference>
<dbReference type="InterPro" id="IPR050123">
    <property type="entry name" value="Prok_molybdopt-oxidoreductase"/>
</dbReference>
<dbReference type="NCBIfam" id="TIGR01973">
    <property type="entry name" value="NuoG"/>
    <property type="match status" value="1"/>
</dbReference>
<dbReference type="PANTHER" id="PTHR43105:SF10">
    <property type="entry name" value="NADH-QUINONE OXIDOREDUCTASE SUBUNIT G"/>
    <property type="match status" value="1"/>
</dbReference>
<dbReference type="PANTHER" id="PTHR43105">
    <property type="entry name" value="RESPIRATORY NITRATE REDUCTASE"/>
    <property type="match status" value="1"/>
</dbReference>
<dbReference type="Pfam" id="PF13510">
    <property type="entry name" value="Fer2_4"/>
    <property type="match status" value="1"/>
</dbReference>
<dbReference type="Pfam" id="PF22117">
    <property type="entry name" value="Fer4_Nqo3"/>
    <property type="match status" value="1"/>
</dbReference>
<dbReference type="Pfam" id="PF04879">
    <property type="entry name" value="Molybdop_Fe4S4"/>
    <property type="match status" value="1"/>
</dbReference>
<dbReference type="Pfam" id="PF00384">
    <property type="entry name" value="Molybdopterin"/>
    <property type="match status" value="1"/>
</dbReference>
<dbReference type="Pfam" id="PF01568">
    <property type="entry name" value="Molydop_binding"/>
    <property type="match status" value="1"/>
</dbReference>
<dbReference type="Pfam" id="PF10588">
    <property type="entry name" value="NADH-G_4Fe-4S_3"/>
    <property type="match status" value="1"/>
</dbReference>
<dbReference type="SMART" id="SM00926">
    <property type="entry name" value="Molybdop_Fe4S4"/>
    <property type="match status" value="1"/>
</dbReference>
<dbReference type="SMART" id="SM00929">
    <property type="entry name" value="NADH-G_4Fe-4S_3"/>
    <property type="match status" value="1"/>
</dbReference>
<dbReference type="SUPFAM" id="SSF54292">
    <property type="entry name" value="2Fe-2S ferredoxin-like"/>
    <property type="match status" value="1"/>
</dbReference>
<dbReference type="SUPFAM" id="SSF54862">
    <property type="entry name" value="4Fe-4S ferredoxins"/>
    <property type="match status" value="1"/>
</dbReference>
<dbReference type="SUPFAM" id="SSF50692">
    <property type="entry name" value="ADC-like"/>
    <property type="match status" value="1"/>
</dbReference>
<dbReference type="SUPFAM" id="SSF53706">
    <property type="entry name" value="Formate dehydrogenase/DMSO reductase, domains 1-3"/>
    <property type="match status" value="1"/>
</dbReference>
<dbReference type="PROSITE" id="PS51085">
    <property type="entry name" value="2FE2S_FER_2"/>
    <property type="match status" value="1"/>
</dbReference>
<dbReference type="PROSITE" id="PS51839">
    <property type="entry name" value="4FE4S_HC3"/>
    <property type="match status" value="1"/>
</dbReference>
<dbReference type="PROSITE" id="PS51669">
    <property type="entry name" value="4FE4S_MOW_BIS_MGD"/>
    <property type="match status" value="1"/>
</dbReference>
<dbReference type="PROSITE" id="PS00641">
    <property type="entry name" value="COMPLEX1_75K_1"/>
    <property type="match status" value="1"/>
</dbReference>
<dbReference type="PROSITE" id="PS00642">
    <property type="entry name" value="COMPLEX1_75K_2"/>
    <property type="match status" value="1"/>
</dbReference>
<dbReference type="PROSITE" id="PS00643">
    <property type="entry name" value="COMPLEX1_75K_3"/>
    <property type="match status" value="1"/>
</dbReference>
<reference key="1">
    <citation type="journal article" date="1993" name="J. Mol. Biol.">
        <title>The gene locus of the proton-translocating NADH: ubiquinone oxidoreductase in Escherichia coli. Organization of the 14 genes and relationship between the derived proteins and subunits of mitochondrial complex I.</title>
        <authorList>
            <person name="Weidner U."/>
            <person name="Geier S."/>
            <person name="Ptock A."/>
            <person name="Friedrich T."/>
            <person name="Leif H."/>
            <person name="Weiss H."/>
        </authorList>
    </citation>
    <scope>NUCLEOTIDE SEQUENCE [GENOMIC DNA]</scope>
    <source>
        <strain>K12 / AN387</strain>
    </source>
</reference>
<reference key="2">
    <citation type="journal article" date="1997" name="DNA Res.">
        <title>Construction of a contiguous 874-kb sequence of the Escherichia coli-K12 genome corresponding to 50.0-68.8 min on the linkage map and analysis of its sequence features.</title>
        <authorList>
            <person name="Yamamoto Y."/>
            <person name="Aiba H."/>
            <person name="Baba T."/>
            <person name="Hayashi K."/>
            <person name="Inada T."/>
            <person name="Isono K."/>
            <person name="Itoh T."/>
            <person name="Kimura S."/>
            <person name="Kitagawa M."/>
            <person name="Makino K."/>
            <person name="Miki T."/>
            <person name="Mitsuhashi N."/>
            <person name="Mizobuchi K."/>
            <person name="Mori H."/>
            <person name="Nakade S."/>
            <person name="Nakamura Y."/>
            <person name="Nashimoto H."/>
            <person name="Oshima T."/>
            <person name="Oyama S."/>
            <person name="Saito N."/>
            <person name="Sampei G."/>
            <person name="Satoh Y."/>
            <person name="Sivasundaram S."/>
            <person name="Tagami H."/>
            <person name="Takahashi H."/>
            <person name="Takeda J."/>
            <person name="Takemoto K."/>
            <person name="Uehara K."/>
            <person name="Wada C."/>
            <person name="Yamagata S."/>
            <person name="Horiuchi T."/>
        </authorList>
    </citation>
    <scope>NUCLEOTIDE SEQUENCE [LARGE SCALE GENOMIC DNA]</scope>
    <source>
        <strain>K12 / W3110 / ATCC 27325 / DSM 5911</strain>
    </source>
</reference>
<reference key="3">
    <citation type="journal article" date="1997" name="Science">
        <title>The complete genome sequence of Escherichia coli K-12.</title>
        <authorList>
            <person name="Blattner F.R."/>
            <person name="Plunkett G. III"/>
            <person name="Bloch C.A."/>
            <person name="Perna N.T."/>
            <person name="Burland V."/>
            <person name="Riley M."/>
            <person name="Collado-Vides J."/>
            <person name="Glasner J.D."/>
            <person name="Rode C.K."/>
            <person name="Mayhew G.F."/>
            <person name="Gregor J."/>
            <person name="Davis N.W."/>
            <person name="Kirkpatrick H.A."/>
            <person name="Goeden M.A."/>
            <person name="Rose D.J."/>
            <person name="Mau B."/>
            <person name="Shao Y."/>
        </authorList>
    </citation>
    <scope>NUCLEOTIDE SEQUENCE [LARGE SCALE GENOMIC DNA]</scope>
    <source>
        <strain>K12 / MG1655 / ATCC 47076</strain>
    </source>
</reference>
<reference key="4">
    <citation type="journal article" date="2006" name="Mol. Syst. Biol.">
        <title>Highly accurate genome sequences of Escherichia coli K-12 strains MG1655 and W3110.</title>
        <authorList>
            <person name="Hayashi K."/>
            <person name="Morooka N."/>
            <person name="Yamamoto Y."/>
            <person name="Fujita K."/>
            <person name="Isono K."/>
            <person name="Choi S."/>
            <person name="Ohtsubo E."/>
            <person name="Baba T."/>
            <person name="Wanner B.L."/>
            <person name="Mori H."/>
            <person name="Horiuchi T."/>
        </authorList>
    </citation>
    <scope>NUCLEOTIDE SEQUENCE [LARGE SCALE GENOMIC DNA]</scope>
    <source>
        <strain>K12 / W3110 / ATCC 27325 / DSM 5911</strain>
    </source>
</reference>
<reference key="5">
    <citation type="journal article" date="1994" name="J. Bacteriol.">
        <title>Mutations in NADH:ubiquinone oxidoreductase of Escherichia coli affect growth on mixed amino acids.</title>
        <authorList>
            <person name="Pruss B.M."/>
            <person name="Nelms J.M."/>
            <person name="Park C."/>
            <person name="Wolfe A.J."/>
        </authorList>
    </citation>
    <scope>NUCLEOTIDE SEQUENCE [GENOMIC DNA] OF 1-170</scope>
</reference>
<reference key="6">
    <citation type="journal article" date="1997" name="Electrophoresis">
        <title>Comparing the predicted and observed properties of proteins encoded in the genome of Escherichia coli K-12.</title>
        <authorList>
            <person name="Link A.J."/>
            <person name="Robison K."/>
            <person name="Church G.M."/>
        </authorList>
    </citation>
    <scope>PROTEIN SEQUENCE OF 2-13</scope>
    <source>
        <strain>K12 / EMG2</strain>
    </source>
</reference>
<reference key="7">
    <citation type="journal article" date="2005" name="J. Biol. Chem.">
        <title>Protein complexes of the Escherichia coli cell envelope.</title>
        <authorList>
            <person name="Stenberg F."/>
            <person name="Chovanec P."/>
            <person name="Maslen S.L."/>
            <person name="Robinson C.V."/>
            <person name="Ilag L."/>
            <person name="von Heijne G."/>
            <person name="Daley D.O."/>
        </authorList>
    </citation>
    <scope>SUBCELLULAR LOCATION</scope>
    <source>
        <strain>BL21-DE3</strain>
    </source>
</reference>
<sequence length="908" mass="100299">MATIHVDGKEYEVNGADNLLEACLSLGLDIPYFCWHPALGSVGACRQCAVKQYQNAEDTRGRLVMSCMTPASDGTFISIDDEEAKQFRESVVEWLMTNHPHDCPVCEEGGNCHLQDMTVMTGHSFRRYRFTKRTHRNQDLGPFISHEMNRCIACYRCVRYYKDYADGTDLGVYGAHDNVYFGRPEDGTLESEFSGNLVEICPTGVFTDKTHSERYNRKWDMQFAPSICQQCSIGCNISPGERYGELRRIENRYNGTVNHYFLCDRGRFGYGYVNLKDRPRQPVQRRGDDFITLNAEQAMQGAADILRQSKKVIGIGSPRASVESNFALRELVGEENFYTGIAHGEQERLQLALKVLREGGIYTPALREIESYDAVLVLGEDVTQTGARVALAVRQAVKGKAREMAAAQKVADWQIAAILNIGQRAKHPLFVTNVDDTRLDDIAAWTYRAPVEDQARLGFAIAHALDNSAPAVDGIEPELQSKIDVIVQALAGAKKPLIISGTNAGSLEVIQAAANVAKALKGRGADVGITMIARSVNSMGLGIMGGGSLEEALTELETGRADAVVVLENDLHRHASAIRVNAALAKAPLVMVVDHQRTAIMENAHLVLSAASFAESDGTVINNEGRAQRFFQVYDPAYYDSKTVMLESWRWLHSLHSTLLSREVDWTQLDHVIDAVVAKIPELAGIKDAAPDATFRIRGQKLAREPHRYSGRTAMRANISVHEPRQPQDIDTMFTFSMEGNNQPTAHRSQVPFAWAPGWNSPQAWNKFQDEVGGKLRFGDPGVRLFETSENGLDYFTSVPARFQPQDGKWRIAPYYHLFGSDELSQRAPVFQSRMPQPYIKLNPADAAKLGVNAGTRVSFSYDGNTVTLPVEIAEGLTAGQVGLPMGMSGIAPVLAGAHLEDLKEAQQ</sequence>
<comment type="function">
    <text>NDH-1 shuttles electrons from NADH, via FMN and iron-sulfur (Fe-S) centers, to quinones in the respiratory chain. The immediate electron acceptor for the enzyme in this species is believed to be ubiquinone. Couples the redox reaction to proton translocation (for every two electrons transferred, four hydrogen ions are translocated across the cytoplasmic membrane), and thus conserves the redox energy in a proton gradient.</text>
</comment>
<comment type="catalytic activity">
    <reaction>
        <text>a quinone + NADH + 5 H(+)(in) = a quinol + NAD(+) + 4 H(+)(out)</text>
        <dbReference type="Rhea" id="RHEA:57888"/>
        <dbReference type="ChEBI" id="CHEBI:15378"/>
        <dbReference type="ChEBI" id="CHEBI:24646"/>
        <dbReference type="ChEBI" id="CHEBI:57540"/>
        <dbReference type="ChEBI" id="CHEBI:57945"/>
        <dbReference type="ChEBI" id="CHEBI:132124"/>
    </reaction>
</comment>
<comment type="cofactor">
    <cofactor evidence="1">
        <name>[2Fe-2S] cluster</name>
        <dbReference type="ChEBI" id="CHEBI:190135"/>
    </cofactor>
    <text evidence="1">Binds 1 [2Fe-2S] cluster per subunit.</text>
</comment>
<comment type="cofactor">
    <cofactor evidence="1">
        <name>[4Fe-4S] cluster</name>
        <dbReference type="ChEBI" id="CHEBI:49883"/>
    </cofactor>
    <text evidence="1">Binds 3 [4Fe-4S] clusters per subunit.</text>
</comment>
<comment type="subunit">
    <text>Composed of 13 different subunits. Subunits NuoCD, E, F, and G constitute the peripheral sector of the complex.</text>
</comment>
<comment type="interaction">
    <interactant intactId="EBI-559737">
        <id>P33602</id>
    </interactant>
    <interactant intactId="EBI-552399">
        <id>P33599</id>
        <label>nuoC</label>
    </interactant>
    <organismsDiffer>false</organismsDiffer>
    <experiments>2</experiments>
</comment>
<comment type="interaction">
    <interactant intactId="EBI-559737">
        <id>P33602</id>
    </interactant>
    <interactant intactId="EBI-1117136">
        <id>P0AFD1</id>
        <label>nuoE</label>
    </interactant>
    <organismsDiffer>false</organismsDiffer>
    <experiments>4</experiments>
</comment>
<comment type="subcellular location">
    <subcellularLocation>
        <location evidence="5">Cytoplasm</location>
    </subcellularLocation>
    <subcellularLocation>
        <location evidence="5">Cell inner membrane</location>
        <topology evidence="5">Peripheral membrane protein</topology>
    </subcellularLocation>
</comment>
<comment type="similarity">
    <text evidence="7">Belongs to the complex I 75 kDa subunit family.</text>
</comment>
<comment type="sequence caution" evidence="7">
    <conflict type="erroneous initiation">
        <sequence resource="EMBL-CDS" id="BAA16111"/>
    </conflict>
</comment>
<comment type="sequence caution" evidence="7">
    <conflict type="frameshift">
        <sequence resource="EMBL-CDS" id="CAA48366"/>
    </conflict>
</comment>
<protein>
    <recommendedName>
        <fullName>NADH-quinone oxidoreductase subunit G</fullName>
        <ecNumber>7.1.1.-</ecNumber>
    </recommendedName>
    <alternativeName>
        <fullName>NADH dehydrogenase I subunit G</fullName>
    </alternativeName>
    <alternativeName>
        <fullName>NDH-1 subunit G</fullName>
    </alternativeName>
    <alternativeName>
        <fullName>NUO7</fullName>
    </alternativeName>
</protein>
<proteinExistence type="evidence at protein level"/>